<proteinExistence type="inferred from homology"/>
<feature type="chain" id="PRO_0000189216" description="4-diphosphocytidyl-2-C-methyl-D-erythritol kinase">
    <location>
        <begin position="1"/>
        <end position="283"/>
    </location>
</feature>
<feature type="active site" evidence="1">
    <location>
        <position position="10"/>
    </location>
</feature>
<feature type="active site" evidence="1">
    <location>
        <position position="141"/>
    </location>
</feature>
<feature type="binding site" evidence="1">
    <location>
        <begin position="99"/>
        <end position="109"/>
    </location>
    <ligand>
        <name>ATP</name>
        <dbReference type="ChEBI" id="CHEBI:30616"/>
    </ligand>
</feature>
<reference key="1">
    <citation type="journal article" date="2001" name="Nature">
        <title>Genome sequence of enterohaemorrhagic Escherichia coli O157:H7.</title>
        <authorList>
            <person name="Perna N.T."/>
            <person name="Plunkett G. III"/>
            <person name="Burland V."/>
            <person name="Mau B."/>
            <person name="Glasner J.D."/>
            <person name="Rose D.J."/>
            <person name="Mayhew G.F."/>
            <person name="Evans P.S."/>
            <person name="Gregor J."/>
            <person name="Kirkpatrick H.A."/>
            <person name="Posfai G."/>
            <person name="Hackett J."/>
            <person name="Klink S."/>
            <person name="Boutin A."/>
            <person name="Shao Y."/>
            <person name="Miller L."/>
            <person name="Grotbeck E.J."/>
            <person name="Davis N.W."/>
            <person name="Lim A."/>
            <person name="Dimalanta E.T."/>
            <person name="Potamousis K."/>
            <person name="Apodaca J."/>
            <person name="Anantharaman T.S."/>
            <person name="Lin J."/>
            <person name="Yen G."/>
            <person name="Schwartz D.C."/>
            <person name="Welch R.A."/>
            <person name="Blattner F.R."/>
        </authorList>
    </citation>
    <scope>NUCLEOTIDE SEQUENCE [LARGE SCALE GENOMIC DNA]</scope>
    <source>
        <strain>O157:H7 / EDL933 / ATCC 700927 / EHEC</strain>
    </source>
</reference>
<reference key="2">
    <citation type="journal article" date="2001" name="DNA Res.">
        <title>Complete genome sequence of enterohemorrhagic Escherichia coli O157:H7 and genomic comparison with a laboratory strain K-12.</title>
        <authorList>
            <person name="Hayashi T."/>
            <person name="Makino K."/>
            <person name="Ohnishi M."/>
            <person name="Kurokawa K."/>
            <person name="Ishii K."/>
            <person name="Yokoyama K."/>
            <person name="Han C.-G."/>
            <person name="Ohtsubo E."/>
            <person name="Nakayama K."/>
            <person name="Murata T."/>
            <person name="Tanaka M."/>
            <person name="Tobe T."/>
            <person name="Iida T."/>
            <person name="Takami H."/>
            <person name="Honda T."/>
            <person name="Sasakawa C."/>
            <person name="Ogasawara N."/>
            <person name="Yasunaga T."/>
            <person name="Kuhara S."/>
            <person name="Shiba T."/>
            <person name="Hattori M."/>
            <person name="Shinagawa H."/>
        </authorList>
    </citation>
    <scope>NUCLEOTIDE SEQUENCE [LARGE SCALE GENOMIC DNA]</scope>
    <source>
        <strain>O157:H7 / Sakai / RIMD 0509952 / EHEC</strain>
    </source>
</reference>
<name>ISPE_ECO57</name>
<organism>
    <name type="scientific">Escherichia coli O157:H7</name>
    <dbReference type="NCBI Taxonomy" id="83334"/>
    <lineage>
        <taxon>Bacteria</taxon>
        <taxon>Pseudomonadati</taxon>
        <taxon>Pseudomonadota</taxon>
        <taxon>Gammaproteobacteria</taxon>
        <taxon>Enterobacterales</taxon>
        <taxon>Enterobacteriaceae</taxon>
        <taxon>Escherichia</taxon>
    </lineage>
</organism>
<sequence>MRTQWPSPAKLNLFLYITGQRADGYHTLQTLFQFLDYGDTISIELRDDGDIRLLTPVEGVEHEDNLIVRAARLLMKTAADSGRLPTGSGANISIDKRLPMGGGLGGGSSNAATVLVALNHLWQCGLSMDELAEMGLTLGADVPVFVRGHAAFAEGVGEILTPVDPPEKWYLVAHPGVSIPTPVIFKDPELPRNTPKRSIETLLKCEFSNDCEVIARKRFREVDAVLSWLLEYAPSRLTGTGACVFAEFDTESEARQVLEQAPEWLNGFVAKGANLSPLHRAML</sequence>
<accession>P62616</accession>
<accession>P24209</accession>
<gene>
    <name evidence="1" type="primary">ispE</name>
    <name type="ordered locus">Z1979</name>
    <name type="ordered locus">ECs1713</name>
</gene>
<evidence type="ECO:0000255" key="1">
    <source>
        <dbReference type="HAMAP-Rule" id="MF_00061"/>
    </source>
</evidence>
<comment type="function">
    <text evidence="1">Catalyzes the phosphorylation of the position 2 hydroxy group of 4-diphosphocytidyl-2C-methyl-D-erythritol.</text>
</comment>
<comment type="catalytic activity">
    <reaction evidence="1">
        <text>4-CDP-2-C-methyl-D-erythritol + ATP = 4-CDP-2-C-methyl-D-erythritol 2-phosphate + ADP + H(+)</text>
        <dbReference type="Rhea" id="RHEA:18437"/>
        <dbReference type="ChEBI" id="CHEBI:15378"/>
        <dbReference type="ChEBI" id="CHEBI:30616"/>
        <dbReference type="ChEBI" id="CHEBI:57823"/>
        <dbReference type="ChEBI" id="CHEBI:57919"/>
        <dbReference type="ChEBI" id="CHEBI:456216"/>
        <dbReference type="EC" id="2.7.1.148"/>
    </reaction>
</comment>
<comment type="pathway">
    <text evidence="1">Isoprenoid biosynthesis; isopentenyl diphosphate biosynthesis via DXP pathway; isopentenyl diphosphate from 1-deoxy-D-xylulose 5-phosphate: step 3/6.</text>
</comment>
<comment type="subunit">
    <text evidence="1">Homodimer.</text>
</comment>
<comment type="similarity">
    <text evidence="1">Belongs to the GHMP kinase family. IspE subfamily.</text>
</comment>
<protein>
    <recommendedName>
        <fullName evidence="1">4-diphosphocytidyl-2-C-methyl-D-erythritol kinase</fullName>
        <shortName evidence="1">CMK</shortName>
        <ecNumber evidence="1">2.7.1.148</ecNumber>
    </recommendedName>
    <alternativeName>
        <fullName evidence="1">4-(cytidine-5'-diphospho)-2-C-methyl-D-erythritol kinase</fullName>
    </alternativeName>
</protein>
<keyword id="KW-0067">ATP-binding</keyword>
<keyword id="KW-0414">Isoprene biosynthesis</keyword>
<keyword id="KW-0418">Kinase</keyword>
<keyword id="KW-0547">Nucleotide-binding</keyword>
<keyword id="KW-1185">Reference proteome</keyword>
<keyword id="KW-0808">Transferase</keyword>
<dbReference type="EC" id="2.7.1.148" evidence="1"/>
<dbReference type="EMBL" id="AE005174">
    <property type="protein sequence ID" value="AAG56066.1"/>
    <property type="molecule type" value="Genomic_DNA"/>
</dbReference>
<dbReference type="EMBL" id="BA000007">
    <property type="protein sequence ID" value="BAB35136.1"/>
    <property type="molecule type" value="Genomic_DNA"/>
</dbReference>
<dbReference type="PIR" id="A90843">
    <property type="entry name" value="A90843"/>
</dbReference>
<dbReference type="RefSeq" id="NP_309740.1">
    <property type="nucleotide sequence ID" value="NC_002695.1"/>
</dbReference>
<dbReference type="RefSeq" id="WP_001260332.1">
    <property type="nucleotide sequence ID" value="NZ_VOAI01000038.1"/>
</dbReference>
<dbReference type="SMR" id="P62616"/>
<dbReference type="IntAct" id="P62616">
    <property type="interactions" value="1"/>
</dbReference>
<dbReference type="MINT" id="P62616"/>
<dbReference type="STRING" id="155864.Z1979"/>
<dbReference type="GeneID" id="913150"/>
<dbReference type="KEGG" id="ece:Z1979"/>
<dbReference type="KEGG" id="ecs:ECs_1713"/>
<dbReference type="PATRIC" id="fig|386585.9.peg.1811"/>
<dbReference type="eggNOG" id="COG1947">
    <property type="taxonomic scope" value="Bacteria"/>
</dbReference>
<dbReference type="HOGENOM" id="CLU_053057_3_0_6"/>
<dbReference type="OMA" id="RWPSPAK"/>
<dbReference type="UniPathway" id="UPA00056">
    <property type="reaction ID" value="UER00094"/>
</dbReference>
<dbReference type="Proteomes" id="UP000000558">
    <property type="component" value="Chromosome"/>
</dbReference>
<dbReference type="Proteomes" id="UP000002519">
    <property type="component" value="Chromosome"/>
</dbReference>
<dbReference type="GO" id="GO:0050515">
    <property type="term" value="F:4-(cytidine 5'-diphospho)-2-C-methyl-D-erythritol kinase activity"/>
    <property type="evidence" value="ECO:0007669"/>
    <property type="project" value="UniProtKB-UniRule"/>
</dbReference>
<dbReference type="GO" id="GO:0005524">
    <property type="term" value="F:ATP binding"/>
    <property type="evidence" value="ECO:0007669"/>
    <property type="project" value="UniProtKB-UniRule"/>
</dbReference>
<dbReference type="GO" id="GO:0019288">
    <property type="term" value="P:isopentenyl diphosphate biosynthetic process, methylerythritol 4-phosphate pathway"/>
    <property type="evidence" value="ECO:0007669"/>
    <property type="project" value="UniProtKB-UniRule"/>
</dbReference>
<dbReference type="GO" id="GO:0016114">
    <property type="term" value="P:terpenoid biosynthetic process"/>
    <property type="evidence" value="ECO:0007669"/>
    <property type="project" value="InterPro"/>
</dbReference>
<dbReference type="FunFam" id="3.30.230.10:FF:000022">
    <property type="entry name" value="4-diphosphocytidyl-2-C-methyl-D-erythritol kinase"/>
    <property type="match status" value="1"/>
</dbReference>
<dbReference type="FunFam" id="3.30.70.890:FF:000004">
    <property type="entry name" value="4-diphosphocytidyl-2-C-methyl-D-erythritol kinase"/>
    <property type="match status" value="1"/>
</dbReference>
<dbReference type="Gene3D" id="3.30.230.10">
    <property type="match status" value="1"/>
</dbReference>
<dbReference type="Gene3D" id="3.30.70.890">
    <property type="entry name" value="GHMP kinase, C-terminal domain"/>
    <property type="match status" value="1"/>
</dbReference>
<dbReference type="HAMAP" id="MF_00061">
    <property type="entry name" value="IspE"/>
    <property type="match status" value="1"/>
</dbReference>
<dbReference type="InterPro" id="IPR013750">
    <property type="entry name" value="GHMP_kinase_C_dom"/>
</dbReference>
<dbReference type="InterPro" id="IPR036554">
    <property type="entry name" value="GHMP_kinase_C_sf"/>
</dbReference>
<dbReference type="InterPro" id="IPR006204">
    <property type="entry name" value="GHMP_kinase_N_dom"/>
</dbReference>
<dbReference type="InterPro" id="IPR004424">
    <property type="entry name" value="IspE"/>
</dbReference>
<dbReference type="InterPro" id="IPR020568">
    <property type="entry name" value="Ribosomal_Su5_D2-typ_SF"/>
</dbReference>
<dbReference type="InterPro" id="IPR014721">
    <property type="entry name" value="Ribsml_uS5_D2-typ_fold_subgr"/>
</dbReference>
<dbReference type="NCBIfam" id="TIGR00154">
    <property type="entry name" value="ispE"/>
    <property type="match status" value="1"/>
</dbReference>
<dbReference type="PANTHER" id="PTHR43527">
    <property type="entry name" value="4-DIPHOSPHOCYTIDYL-2-C-METHYL-D-ERYTHRITOL KINASE, CHLOROPLASTIC"/>
    <property type="match status" value="1"/>
</dbReference>
<dbReference type="PANTHER" id="PTHR43527:SF2">
    <property type="entry name" value="4-DIPHOSPHOCYTIDYL-2-C-METHYL-D-ERYTHRITOL KINASE, CHLOROPLASTIC"/>
    <property type="match status" value="1"/>
</dbReference>
<dbReference type="Pfam" id="PF08544">
    <property type="entry name" value="GHMP_kinases_C"/>
    <property type="match status" value="1"/>
</dbReference>
<dbReference type="Pfam" id="PF00288">
    <property type="entry name" value="GHMP_kinases_N"/>
    <property type="match status" value="1"/>
</dbReference>
<dbReference type="PIRSF" id="PIRSF010376">
    <property type="entry name" value="IspE"/>
    <property type="match status" value="1"/>
</dbReference>
<dbReference type="SUPFAM" id="SSF55060">
    <property type="entry name" value="GHMP Kinase, C-terminal domain"/>
    <property type="match status" value="1"/>
</dbReference>
<dbReference type="SUPFAM" id="SSF54211">
    <property type="entry name" value="Ribosomal protein S5 domain 2-like"/>
    <property type="match status" value="1"/>
</dbReference>